<sequence>MNKFIKVALVGAVLATLTACTGHIENRDKNCSYDYLLHPAISISKIIGGCGPTAQ</sequence>
<name>YHFL_SHIFL</name>
<accession>P64630</accession>
<accession>P45538</accession>
<organism>
    <name type="scientific">Shigella flexneri</name>
    <dbReference type="NCBI Taxonomy" id="623"/>
    <lineage>
        <taxon>Bacteria</taxon>
        <taxon>Pseudomonadati</taxon>
        <taxon>Pseudomonadota</taxon>
        <taxon>Gammaproteobacteria</taxon>
        <taxon>Enterobacterales</taxon>
        <taxon>Enterobacteriaceae</taxon>
        <taxon>Shigella</taxon>
    </lineage>
</organism>
<keyword id="KW-0472">Membrane</keyword>
<keyword id="KW-1185">Reference proteome</keyword>
<keyword id="KW-0812">Transmembrane</keyword>
<keyword id="KW-1133">Transmembrane helix</keyword>
<proteinExistence type="predicted"/>
<evidence type="ECO:0000255" key="1"/>
<evidence type="ECO:0000305" key="2"/>
<gene>
    <name type="primary">yhfL</name>
    <name type="ordered locus">SF3388</name>
    <name type="ordered locus">S4375</name>
</gene>
<comment type="subcellular location">
    <subcellularLocation>
        <location evidence="2">Membrane</location>
        <topology evidence="2">Single-pass membrane protein</topology>
    </subcellularLocation>
</comment>
<protein>
    <recommendedName>
        <fullName>Uncharacterized protein YhfL</fullName>
    </recommendedName>
</protein>
<reference key="1">
    <citation type="journal article" date="2002" name="Nucleic Acids Res.">
        <title>Genome sequence of Shigella flexneri 2a: insights into pathogenicity through comparison with genomes of Escherichia coli K12 and O157.</title>
        <authorList>
            <person name="Jin Q."/>
            <person name="Yuan Z."/>
            <person name="Xu J."/>
            <person name="Wang Y."/>
            <person name="Shen Y."/>
            <person name="Lu W."/>
            <person name="Wang J."/>
            <person name="Liu H."/>
            <person name="Yang J."/>
            <person name="Yang F."/>
            <person name="Zhang X."/>
            <person name="Zhang J."/>
            <person name="Yang G."/>
            <person name="Wu H."/>
            <person name="Qu D."/>
            <person name="Dong J."/>
            <person name="Sun L."/>
            <person name="Xue Y."/>
            <person name="Zhao A."/>
            <person name="Gao Y."/>
            <person name="Zhu J."/>
            <person name="Kan B."/>
            <person name="Ding K."/>
            <person name="Chen S."/>
            <person name="Cheng H."/>
            <person name="Yao Z."/>
            <person name="He B."/>
            <person name="Chen R."/>
            <person name="Ma D."/>
            <person name="Qiang B."/>
            <person name="Wen Y."/>
            <person name="Hou Y."/>
            <person name="Yu J."/>
        </authorList>
    </citation>
    <scope>NUCLEOTIDE SEQUENCE [LARGE SCALE GENOMIC DNA]</scope>
    <source>
        <strain>301 / Serotype 2a</strain>
    </source>
</reference>
<reference key="2">
    <citation type="journal article" date="2003" name="Infect. Immun.">
        <title>Complete genome sequence and comparative genomics of Shigella flexneri serotype 2a strain 2457T.</title>
        <authorList>
            <person name="Wei J."/>
            <person name="Goldberg M.B."/>
            <person name="Burland V."/>
            <person name="Venkatesan M.M."/>
            <person name="Deng W."/>
            <person name="Fournier G."/>
            <person name="Mayhew G.F."/>
            <person name="Plunkett G. III"/>
            <person name="Rose D.J."/>
            <person name="Darling A."/>
            <person name="Mau B."/>
            <person name="Perna N.T."/>
            <person name="Payne S.M."/>
            <person name="Runyen-Janecky L.J."/>
            <person name="Zhou S."/>
            <person name="Schwartz D.C."/>
            <person name="Blattner F.R."/>
        </authorList>
    </citation>
    <scope>NUCLEOTIDE SEQUENCE [LARGE SCALE GENOMIC DNA]</scope>
    <source>
        <strain>ATCC 700930 / 2457T / Serotype 2a</strain>
    </source>
</reference>
<dbReference type="EMBL" id="AE005674">
    <property type="protein sequence ID" value="AAN44851.1"/>
    <property type="molecule type" value="Genomic_DNA"/>
</dbReference>
<dbReference type="EMBL" id="AE014073">
    <property type="protein sequence ID" value="AAP19327.1"/>
    <property type="molecule type" value="Genomic_DNA"/>
</dbReference>
<dbReference type="RefSeq" id="NP_709144.1">
    <property type="nucleotide sequence ID" value="NC_004337.2"/>
</dbReference>
<dbReference type="RefSeq" id="WP_001031834.1">
    <property type="nucleotide sequence ID" value="NZ_WPGW01000003.1"/>
</dbReference>
<dbReference type="STRING" id="198214.SF3388"/>
<dbReference type="PaxDb" id="198214-SF3388"/>
<dbReference type="GeneID" id="1026525"/>
<dbReference type="KEGG" id="sfl:SF3388"/>
<dbReference type="KEGG" id="sfx:S4375"/>
<dbReference type="PATRIC" id="fig|198214.7.peg.4000"/>
<dbReference type="HOGENOM" id="CLU_197401_0_0_6"/>
<dbReference type="Proteomes" id="UP000001006">
    <property type="component" value="Chromosome"/>
</dbReference>
<dbReference type="Proteomes" id="UP000002673">
    <property type="component" value="Chromosome"/>
</dbReference>
<dbReference type="GO" id="GO:0016020">
    <property type="term" value="C:membrane"/>
    <property type="evidence" value="ECO:0007669"/>
    <property type="project" value="UniProtKB-SubCell"/>
</dbReference>
<dbReference type="InterPro" id="IPR025318">
    <property type="entry name" value="DUF4223"/>
</dbReference>
<dbReference type="Pfam" id="PF13978">
    <property type="entry name" value="DUF4223"/>
    <property type="match status" value="1"/>
</dbReference>
<dbReference type="PROSITE" id="PS51257">
    <property type="entry name" value="PROKAR_LIPOPROTEIN"/>
    <property type="match status" value="1"/>
</dbReference>
<feature type="chain" id="PRO_0000169527" description="Uncharacterized protein YhfL">
    <location>
        <begin position="1"/>
        <end position="55"/>
    </location>
</feature>
<feature type="transmembrane region" description="Helical" evidence="1">
    <location>
        <begin position="7"/>
        <end position="24"/>
    </location>
</feature>